<dbReference type="EC" id="2.3.1.47" evidence="1"/>
<dbReference type="EMBL" id="CP000305">
    <property type="protein sequence ID" value="ABG19176.1"/>
    <property type="molecule type" value="Genomic_DNA"/>
</dbReference>
<dbReference type="EMBL" id="ACNQ01000017">
    <property type="protein sequence ID" value="EEO75320.1"/>
    <property type="molecule type" value="Genomic_DNA"/>
</dbReference>
<dbReference type="RefSeq" id="WP_002210763.1">
    <property type="nucleotide sequence ID" value="NZ_ACNQ01000017.1"/>
</dbReference>
<dbReference type="SMR" id="Q1CFQ4"/>
<dbReference type="GeneID" id="57977291"/>
<dbReference type="KEGG" id="ypn:YPN_2849"/>
<dbReference type="HOGENOM" id="CLU_015846_11_2_6"/>
<dbReference type="UniPathway" id="UPA00078"/>
<dbReference type="Proteomes" id="UP000008936">
    <property type="component" value="Chromosome"/>
</dbReference>
<dbReference type="GO" id="GO:0008710">
    <property type="term" value="F:8-amino-7-oxononanoate synthase activity"/>
    <property type="evidence" value="ECO:0007669"/>
    <property type="project" value="UniProtKB-UniRule"/>
</dbReference>
<dbReference type="GO" id="GO:0030170">
    <property type="term" value="F:pyridoxal phosphate binding"/>
    <property type="evidence" value="ECO:0007669"/>
    <property type="project" value="UniProtKB-UniRule"/>
</dbReference>
<dbReference type="GO" id="GO:0009102">
    <property type="term" value="P:biotin biosynthetic process"/>
    <property type="evidence" value="ECO:0007669"/>
    <property type="project" value="UniProtKB-UniRule"/>
</dbReference>
<dbReference type="Gene3D" id="3.90.1150.10">
    <property type="entry name" value="Aspartate Aminotransferase, domain 1"/>
    <property type="match status" value="1"/>
</dbReference>
<dbReference type="Gene3D" id="3.40.640.10">
    <property type="entry name" value="Type I PLP-dependent aspartate aminotransferase-like (Major domain)"/>
    <property type="match status" value="1"/>
</dbReference>
<dbReference type="HAMAP" id="MF_01693">
    <property type="entry name" value="BioF_aminotrans_2"/>
    <property type="match status" value="1"/>
</dbReference>
<dbReference type="InterPro" id="IPR001917">
    <property type="entry name" value="Aminotrans_II_pyridoxalP_BS"/>
</dbReference>
<dbReference type="InterPro" id="IPR004839">
    <property type="entry name" value="Aminotransferase_I/II_large"/>
</dbReference>
<dbReference type="InterPro" id="IPR050087">
    <property type="entry name" value="AON_synthase_class-II"/>
</dbReference>
<dbReference type="InterPro" id="IPR004723">
    <property type="entry name" value="AONS_Archaea/Proteobacteria"/>
</dbReference>
<dbReference type="InterPro" id="IPR022834">
    <property type="entry name" value="AONS_Proteobacteria"/>
</dbReference>
<dbReference type="InterPro" id="IPR015424">
    <property type="entry name" value="PyrdxlP-dep_Trfase"/>
</dbReference>
<dbReference type="InterPro" id="IPR015421">
    <property type="entry name" value="PyrdxlP-dep_Trfase_major"/>
</dbReference>
<dbReference type="InterPro" id="IPR015422">
    <property type="entry name" value="PyrdxlP-dep_Trfase_small"/>
</dbReference>
<dbReference type="NCBIfam" id="TIGR00858">
    <property type="entry name" value="bioF"/>
    <property type="match status" value="1"/>
</dbReference>
<dbReference type="PANTHER" id="PTHR13693:SF100">
    <property type="entry name" value="8-AMINO-7-OXONONANOATE SYNTHASE"/>
    <property type="match status" value="1"/>
</dbReference>
<dbReference type="PANTHER" id="PTHR13693">
    <property type="entry name" value="CLASS II AMINOTRANSFERASE/8-AMINO-7-OXONONANOATE SYNTHASE"/>
    <property type="match status" value="1"/>
</dbReference>
<dbReference type="Pfam" id="PF00155">
    <property type="entry name" value="Aminotran_1_2"/>
    <property type="match status" value="1"/>
</dbReference>
<dbReference type="SUPFAM" id="SSF53383">
    <property type="entry name" value="PLP-dependent transferases"/>
    <property type="match status" value="1"/>
</dbReference>
<dbReference type="PROSITE" id="PS00599">
    <property type="entry name" value="AA_TRANSFER_CLASS_2"/>
    <property type="match status" value="1"/>
</dbReference>
<organism>
    <name type="scientific">Yersinia pestis bv. Antiqua (strain Nepal516)</name>
    <dbReference type="NCBI Taxonomy" id="377628"/>
    <lineage>
        <taxon>Bacteria</taxon>
        <taxon>Pseudomonadati</taxon>
        <taxon>Pseudomonadota</taxon>
        <taxon>Gammaproteobacteria</taxon>
        <taxon>Enterobacterales</taxon>
        <taxon>Yersiniaceae</taxon>
        <taxon>Yersinia</taxon>
    </lineage>
</organism>
<proteinExistence type="inferred from homology"/>
<gene>
    <name evidence="1" type="primary">bioF</name>
    <name type="ordered locus">YPN_2849</name>
    <name type="ORF">YP516_3222</name>
</gene>
<name>BIOF_YERPN</name>
<evidence type="ECO:0000255" key="1">
    <source>
        <dbReference type="HAMAP-Rule" id="MF_01693"/>
    </source>
</evidence>
<protein>
    <recommendedName>
        <fullName evidence="1">8-amino-7-oxononanoate synthase</fullName>
        <shortName evidence="1">AONS</shortName>
        <ecNumber evidence="1">2.3.1.47</ecNumber>
    </recommendedName>
    <alternativeName>
        <fullName evidence="1">7-keto-8-amino-pelargonic acid synthase</fullName>
        <shortName evidence="1">7-KAP synthase</shortName>
        <shortName evidence="1">KAPA synthase</shortName>
    </alternativeName>
    <alternativeName>
        <fullName evidence="1">8-amino-7-ketopelargonate synthase</fullName>
    </alternativeName>
</protein>
<keyword id="KW-0093">Biotin biosynthesis</keyword>
<keyword id="KW-0663">Pyridoxal phosphate</keyword>
<keyword id="KW-0808">Transferase</keyword>
<reference key="1">
    <citation type="journal article" date="2006" name="J. Bacteriol.">
        <title>Complete genome sequence of Yersinia pestis strains Antiqua and Nepal516: evidence of gene reduction in an emerging pathogen.</title>
        <authorList>
            <person name="Chain P.S.G."/>
            <person name="Hu P."/>
            <person name="Malfatti S.A."/>
            <person name="Radnedge L."/>
            <person name="Larimer F."/>
            <person name="Vergez L.M."/>
            <person name="Worsham P."/>
            <person name="Chu M.C."/>
            <person name="Andersen G.L."/>
        </authorList>
    </citation>
    <scope>NUCLEOTIDE SEQUENCE [LARGE SCALE GENOMIC DNA]</scope>
    <source>
        <strain>Nepal516</strain>
    </source>
</reference>
<reference key="2">
    <citation type="submission" date="2009-04" db="EMBL/GenBank/DDBJ databases">
        <title>Yersinia pestis Nepal516A whole genome shotgun sequencing project.</title>
        <authorList>
            <person name="Plunkett G. III"/>
            <person name="Anderson B.D."/>
            <person name="Baumler D.J."/>
            <person name="Burland V."/>
            <person name="Cabot E.L."/>
            <person name="Glasner J.D."/>
            <person name="Mau B."/>
            <person name="Neeno-Eckwall E."/>
            <person name="Perna N.T."/>
            <person name="Munk A.C."/>
            <person name="Tapia R."/>
            <person name="Green L.D."/>
            <person name="Rogers Y.C."/>
            <person name="Detter J.C."/>
            <person name="Bruce D.C."/>
            <person name="Brettin T.S."/>
        </authorList>
    </citation>
    <scope>NUCLEOTIDE SEQUENCE [LARGE SCALE GENOMIC DNA]</scope>
    <source>
        <strain>Nepal516</strain>
    </source>
</reference>
<comment type="function">
    <text evidence="1">Catalyzes the decarboxylative condensation of pimeloyl-[acyl-carrier protein] and L-alanine to produce 8-amino-7-oxononanoate (AON), [acyl-carrier protein], and carbon dioxide.</text>
</comment>
<comment type="catalytic activity">
    <reaction evidence="1">
        <text>6-carboxyhexanoyl-[ACP] + L-alanine + H(+) = (8S)-8-amino-7-oxononanoate + holo-[ACP] + CO2</text>
        <dbReference type="Rhea" id="RHEA:42288"/>
        <dbReference type="Rhea" id="RHEA-COMP:9685"/>
        <dbReference type="Rhea" id="RHEA-COMP:9955"/>
        <dbReference type="ChEBI" id="CHEBI:15378"/>
        <dbReference type="ChEBI" id="CHEBI:16526"/>
        <dbReference type="ChEBI" id="CHEBI:57972"/>
        <dbReference type="ChEBI" id="CHEBI:64479"/>
        <dbReference type="ChEBI" id="CHEBI:78846"/>
        <dbReference type="ChEBI" id="CHEBI:149468"/>
        <dbReference type="EC" id="2.3.1.47"/>
    </reaction>
</comment>
<comment type="cofactor">
    <cofactor evidence="1">
        <name>pyridoxal 5'-phosphate</name>
        <dbReference type="ChEBI" id="CHEBI:597326"/>
    </cofactor>
</comment>
<comment type="pathway">
    <text evidence="1">Cofactor biosynthesis; biotin biosynthesis.</text>
</comment>
<comment type="subunit">
    <text evidence="1">Homodimer.</text>
</comment>
<comment type="similarity">
    <text evidence="1">Belongs to the class-II pyridoxal-phosphate-dependent aminotransferase family. BioF subfamily.</text>
</comment>
<sequence length="383" mass="41596">MSWQDKIAQGLQRRRDAAAYRTRQVNEGANGRWLQSGERQYLNFSSNDYLGLSQNDEVIAAWQQGARRYGVGSGGSGHVTGYSQPHARLEQQLADWLGYPRALLFISGYAANQAVLTALTDADDRILADKLSHASLLEAAAHSPAQLRRFQHNQPEALQNLLIKPCQGQTLVVTEGVFSMDGDSAPLAALQQQTSAAGGWLLVDDAHGIGVHGEGGRGSCWLQGVQPELLVVTFGKAFGLSGAAVLCQEPVAEYLLQYARHLIYSTAMPPAQACALQAALRQVQQGDALRQQLQQRIRQFRTAAAHLPLQLGASKTAIQPLLVGDNQQSLIWAEQLRAAGLWVTAIRPPTVPPGSARLRITLSAAHQPEDIDRLLEVLYGLCH</sequence>
<feature type="chain" id="PRO_0000381158" description="8-amino-7-oxononanoate synthase">
    <location>
        <begin position="1"/>
        <end position="383"/>
    </location>
</feature>
<feature type="binding site" evidence="1">
    <location>
        <position position="21"/>
    </location>
    <ligand>
        <name>substrate</name>
    </ligand>
</feature>
<feature type="binding site" evidence="1">
    <location>
        <begin position="108"/>
        <end position="109"/>
    </location>
    <ligand>
        <name>pyridoxal 5'-phosphate</name>
        <dbReference type="ChEBI" id="CHEBI:597326"/>
    </ligand>
</feature>
<feature type="binding site" evidence="1">
    <location>
        <position position="133"/>
    </location>
    <ligand>
        <name>substrate</name>
    </ligand>
</feature>
<feature type="binding site" evidence="1">
    <location>
        <position position="179"/>
    </location>
    <ligand>
        <name>pyridoxal 5'-phosphate</name>
        <dbReference type="ChEBI" id="CHEBI:597326"/>
    </ligand>
</feature>
<feature type="binding site" evidence="1">
    <location>
        <position position="207"/>
    </location>
    <ligand>
        <name>pyridoxal 5'-phosphate</name>
        <dbReference type="ChEBI" id="CHEBI:597326"/>
    </ligand>
</feature>
<feature type="binding site" evidence="1">
    <location>
        <position position="233"/>
    </location>
    <ligand>
        <name>pyridoxal 5'-phosphate</name>
        <dbReference type="ChEBI" id="CHEBI:597326"/>
    </ligand>
</feature>
<feature type="binding site" evidence="1">
    <location>
        <position position="350"/>
    </location>
    <ligand>
        <name>substrate</name>
    </ligand>
</feature>
<feature type="modified residue" description="N6-(pyridoxal phosphate)lysine" evidence="1">
    <location>
        <position position="236"/>
    </location>
</feature>
<accession>Q1CFQ4</accession>